<feature type="signal peptide" evidence="1">
    <location>
        <begin position="1"/>
        <end position="22"/>
    </location>
</feature>
<feature type="chain" id="PRO_0000282165" description="Uncharacterized lipoprotein SAS2375">
    <location>
        <begin position="23"/>
        <end position="252"/>
    </location>
</feature>
<feature type="lipid moiety-binding region" description="N-palmitoyl cysteine" evidence="1">
    <location>
        <position position="23"/>
    </location>
</feature>
<feature type="lipid moiety-binding region" description="S-diacylglycerol cysteine" evidence="1">
    <location>
        <position position="23"/>
    </location>
</feature>
<sequence length="252" mass="29746">MIHSKRLRLWLYLVLLAVFISACGMKEDKQIKENFNKTLSLYPTKNLDDFYDKEGFRDQEFEKGDKGTWIVDSEMVVELKDKKMESRSMVLYINRNTRTTKGNFIVRELWEDSKGYAQSKDTKYPVKMEHNRIIPTKPIADDKLRKEIENFKFFVQYGDFKDINDYKDGDISYNPNVPSYSAEYQLSNNDYNVKQLRKRYDIPTKKAPKLLIKGDGDLKGSSIGHKNLEFTFVENKEENIYFTDSINFKPTK</sequence>
<organism>
    <name type="scientific">Staphylococcus aureus (strain MSSA476)</name>
    <dbReference type="NCBI Taxonomy" id="282459"/>
    <lineage>
        <taxon>Bacteria</taxon>
        <taxon>Bacillati</taxon>
        <taxon>Bacillota</taxon>
        <taxon>Bacilli</taxon>
        <taxon>Bacillales</taxon>
        <taxon>Staphylococcaceae</taxon>
        <taxon>Staphylococcus</taxon>
    </lineage>
</organism>
<reference key="1">
    <citation type="journal article" date="2004" name="Proc. Natl. Acad. Sci. U.S.A.">
        <title>Complete genomes of two clinical Staphylococcus aureus strains: evidence for the rapid evolution of virulence and drug resistance.</title>
        <authorList>
            <person name="Holden M.T.G."/>
            <person name="Feil E.J."/>
            <person name="Lindsay J.A."/>
            <person name="Peacock S.J."/>
            <person name="Day N.P.J."/>
            <person name="Enright M.C."/>
            <person name="Foster T.J."/>
            <person name="Moore C.E."/>
            <person name="Hurst L."/>
            <person name="Atkin R."/>
            <person name="Barron A."/>
            <person name="Bason N."/>
            <person name="Bentley S.D."/>
            <person name="Chillingworth C."/>
            <person name="Chillingworth T."/>
            <person name="Churcher C."/>
            <person name="Clark L."/>
            <person name="Corton C."/>
            <person name="Cronin A."/>
            <person name="Doggett J."/>
            <person name="Dowd L."/>
            <person name="Feltwell T."/>
            <person name="Hance Z."/>
            <person name="Harris B."/>
            <person name="Hauser H."/>
            <person name="Holroyd S."/>
            <person name="Jagels K."/>
            <person name="James K.D."/>
            <person name="Lennard N."/>
            <person name="Line A."/>
            <person name="Mayes R."/>
            <person name="Moule S."/>
            <person name="Mungall K."/>
            <person name="Ormond D."/>
            <person name="Quail M.A."/>
            <person name="Rabbinowitsch E."/>
            <person name="Rutherford K.M."/>
            <person name="Sanders M."/>
            <person name="Sharp S."/>
            <person name="Simmonds M."/>
            <person name="Stevens K."/>
            <person name="Whitehead S."/>
            <person name="Barrell B.G."/>
            <person name="Spratt B.G."/>
            <person name="Parkhill J."/>
        </authorList>
    </citation>
    <scope>NUCLEOTIDE SEQUENCE [LARGE SCALE GENOMIC DNA]</scope>
    <source>
        <strain>MSSA476</strain>
    </source>
</reference>
<keyword id="KW-1003">Cell membrane</keyword>
<keyword id="KW-0449">Lipoprotein</keyword>
<keyword id="KW-0472">Membrane</keyword>
<keyword id="KW-0564">Palmitate</keyword>
<keyword id="KW-0732">Signal</keyword>
<name>Y2375_STAAS</name>
<evidence type="ECO:0000255" key="1">
    <source>
        <dbReference type="PROSITE-ProRule" id="PRU00303"/>
    </source>
</evidence>
<evidence type="ECO:0000305" key="2"/>
<gene>
    <name type="ordered locus">SAS2375</name>
</gene>
<protein>
    <recommendedName>
        <fullName>Uncharacterized lipoprotein SAS2375</fullName>
    </recommendedName>
</protein>
<proteinExistence type="inferred from homology"/>
<accession>Q6G6I6</accession>
<comment type="subcellular location">
    <subcellularLocation>
        <location evidence="1">Cell membrane</location>
        <topology evidence="1">Lipid-anchor</topology>
    </subcellularLocation>
</comment>
<comment type="similarity">
    <text evidence="2">Belongs to the staphylococcal tandem lipoprotein family.</text>
</comment>
<comment type="sequence caution" evidence="2">
    <conflict type="erroneous initiation">
        <sequence resource="EMBL-CDS" id="CAG44189"/>
    </conflict>
</comment>
<dbReference type="EMBL" id="BX571857">
    <property type="protein sequence ID" value="CAG44189.1"/>
    <property type="status" value="ALT_INIT"/>
    <property type="molecule type" value="Genomic_DNA"/>
</dbReference>
<dbReference type="RefSeq" id="WP_000581910.1">
    <property type="nucleotide sequence ID" value="NC_002953.3"/>
</dbReference>
<dbReference type="SMR" id="Q6G6I6"/>
<dbReference type="KEGG" id="sas:SAS2375"/>
<dbReference type="HOGENOM" id="CLU_071589_0_1_9"/>
<dbReference type="GO" id="GO:0005886">
    <property type="term" value="C:plasma membrane"/>
    <property type="evidence" value="ECO:0007669"/>
    <property type="project" value="UniProtKB-SubCell"/>
</dbReference>
<dbReference type="Gene3D" id="2.50.20.40">
    <property type="match status" value="1"/>
</dbReference>
<dbReference type="InterPro" id="IPR007595">
    <property type="entry name" value="Csa"/>
</dbReference>
<dbReference type="InterPro" id="IPR038641">
    <property type="entry name" value="Csa_sf"/>
</dbReference>
<dbReference type="NCBIfam" id="TIGR01742">
    <property type="entry name" value="SA_tandem_lipo"/>
    <property type="match status" value="1"/>
</dbReference>
<dbReference type="Pfam" id="PF04507">
    <property type="entry name" value="DUF576"/>
    <property type="match status" value="1"/>
</dbReference>
<dbReference type="PROSITE" id="PS51257">
    <property type="entry name" value="PROKAR_LIPOPROTEIN"/>
    <property type="match status" value="1"/>
</dbReference>